<accession>B4RSU5</accession>
<accession>F2G7N0</accession>
<feature type="chain" id="PRO_1000091689" description="Elongation factor G">
    <location>
        <begin position="1"/>
        <end position="695"/>
    </location>
</feature>
<feature type="domain" description="tr-type G">
    <location>
        <begin position="5"/>
        <end position="280"/>
    </location>
</feature>
<feature type="region of interest" description="Disordered" evidence="2">
    <location>
        <begin position="279"/>
        <end position="299"/>
    </location>
</feature>
<feature type="binding site" evidence="1">
    <location>
        <begin position="14"/>
        <end position="21"/>
    </location>
    <ligand>
        <name>GTP</name>
        <dbReference type="ChEBI" id="CHEBI:37565"/>
    </ligand>
</feature>
<feature type="binding site" evidence="1">
    <location>
        <begin position="78"/>
        <end position="82"/>
    </location>
    <ligand>
        <name>GTP</name>
        <dbReference type="ChEBI" id="CHEBI:37565"/>
    </ligand>
</feature>
<feature type="binding site" evidence="1">
    <location>
        <begin position="132"/>
        <end position="135"/>
    </location>
    <ligand>
        <name>GTP</name>
        <dbReference type="ChEBI" id="CHEBI:37565"/>
    </ligand>
</feature>
<dbReference type="EMBL" id="CP001103">
    <property type="protein sequence ID" value="AEA97680.1"/>
    <property type="molecule type" value="Genomic_DNA"/>
</dbReference>
<dbReference type="RefSeq" id="WP_012518014.1">
    <property type="nucleotide sequence ID" value="NC_011138.3"/>
</dbReference>
<dbReference type="SMR" id="B4RSU5"/>
<dbReference type="KEGG" id="amc:MADE_1007700"/>
<dbReference type="HOGENOM" id="CLU_002794_4_1_6"/>
<dbReference type="Proteomes" id="UP000001870">
    <property type="component" value="Chromosome"/>
</dbReference>
<dbReference type="GO" id="GO:0005737">
    <property type="term" value="C:cytoplasm"/>
    <property type="evidence" value="ECO:0007669"/>
    <property type="project" value="UniProtKB-SubCell"/>
</dbReference>
<dbReference type="GO" id="GO:0005525">
    <property type="term" value="F:GTP binding"/>
    <property type="evidence" value="ECO:0007669"/>
    <property type="project" value="UniProtKB-UniRule"/>
</dbReference>
<dbReference type="GO" id="GO:0003924">
    <property type="term" value="F:GTPase activity"/>
    <property type="evidence" value="ECO:0007669"/>
    <property type="project" value="InterPro"/>
</dbReference>
<dbReference type="GO" id="GO:0097216">
    <property type="term" value="F:guanosine tetraphosphate binding"/>
    <property type="evidence" value="ECO:0007669"/>
    <property type="project" value="UniProtKB-ARBA"/>
</dbReference>
<dbReference type="GO" id="GO:0003746">
    <property type="term" value="F:translation elongation factor activity"/>
    <property type="evidence" value="ECO:0007669"/>
    <property type="project" value="UniProtKB-UniRule"/>
</dbReference>
<dbReference type="GO" id="GO:0032790">
    <property type="term" value="P:ribosome disassembly"/>
    <property type="evidence" value="ECO:0007669"/>
    <property type="project" value="TreeGrafter"/>
</dbReference>
<dbReference type="CDD" id="cd01886">
    <property type="entry name" value="EF-G"/>
    <property type="match status" value="1"/>
</dbReference>
<dbReference type="CDD" id="cd16262">
    <property type="entry name" value="EFG_III"/>
    <property type="match status" value="1"/>
</dbReference>
<dbReference type="CDD" id="cd01434">
    <property type="entry name" value="EFG_mtEFG1_IV"/>
    <property type="match status" value="1"/>
</dbReference>
<dbReference type="CDD" id="cd03713">
    <property type="entry name" value="EFG_mtEFG_C"/>
    <property type="match status" value="1"/>
</dbReference>
<dbReference type="CDD" id="cd04088">
    <property type="entry name" value="EFG_mtEFG_II"/>
    <property type="match status" value="1"/>
</dbReference>
<dbReference type="FunFam" id="2.40.30.10:FF:000006">
    <property type="entry name" value="Elongation factor G"/>
    <property type="match status" value="1"/>
</dbReference>
<dbReference type="FunFam" id="3.30.230.10:FF:000003">
    <property type="entry name" value="Elongation factor G"/>
    <property type="match status" value="1"/>
</dbReference>
<dbReference type="FunFam" id="3.30.70.240:FF:000001">
    <property type="entry name" value="Elongation factor G"/>
    <property type="match status" value="1"/>
</dbReference>
<dbReference type="FunFam" id="3.30.70.870:FF:000006">
    <property type="entry name" value="Elongation factor G"/>
    <property type="match status" value="1"/>
</dbReference>
<dbReference type="FunFam" id="3.40.50.300:FF:000029">
    <property type="entry name" value="Elongation factor G"/>
    <property type="match status" value="1"/>
</dbReference>
<dbReference type="Gene3D" id="3.30.230.10">
    <property type="match status" value="1"/>
</dbReference>
<dbReference type="Gene3D" id="3.30.70.240">
    <property type="match status" value="1"/>
</dbReference>
<dbReference type="Gene3D" id="3.30.70.870">
    <property type="entry name" value="Elongation Factor G (Translational Gtpase), domain 3"/>
    <property type="match status" value="1"/>
</dbReference>
<dbReference type="Gene3D" id="3.40.50.300">
    <property type="entry name" value="P-loop containing nucleotide triphosphate hydrolases"/>
    <property type="match status" value="1"/>
</dbReference>
<dbReference type="Gene3D" id="2.40.30.10">
    <property type="entry name" value="Translation factors"/>
    <property type="match status" value="1"/>
</dbReference>
<dbReference type="HAMAP" id="MF_00054_B">
    <property type="entry name" value="EF_G_EF_2_B"/>
    <property type="match status" value="1"/>
</dbReference>
<dbReference type="InterPro" id="IPR041095">
    <property type="entry name" value="EFG_II"/>
</dbReference>
<dbReference type="InterPro" id="IPR009022">
    <property type="entry name" value="EFG_III"/>
</dbReference>
<dbReference type="InterPro" id="IPR035647">
    <property type="entry name" value="EFG_III/V"/>
</dbReference>
<dbReference type="InterPro" id="IPR047872">
    <property type="entry name" value="EFG_IV"/>
</dbReference>
<dbReference type="InterPro" id="IPR035649">
    <property type="entry name" value="EFG_V"/>
</dbReference>
<dbReference type="InterPro" id="IPR000640">
    <property type="entry name" value="EFG_V-like"/>
</dbReference>
<dbReference type="InterPro" id="IPR004161">
    <property type="entry name" value="EFTu-like_2"/>
</dbReference>
<dbReference type="InterPro" id="IPR031157">
    <property type="entry name" value="G_TR_CS"/>
</dbReference>
<dbReference type="InterPro" id="IPR027417">
    <property type="entry name" value="P-loop_NTPase"/>
</dbReference>
<dbReference type="InterPro" id="IPR020568">
    <property type="entry name" value="Ribosomal_Su5_D2-typ_SF"/>
</dbReference>
<dbReference type="InterPro" id="IPR014721">
    <property type="entry name" value="Ribsml_uS5_D2-typ_fold_subgr"/>
</dbReference>
<dbReference type="InterPro" id="IPR005225">
    <property type="entry name" value="Small_GTP-bd"/>
</dbReference>
<dbReference type="InterPro" id="IPR000795">
    <property type="entry name" value="T_Tr_GTP-bd_dom"/>
</dbReference>
<dbReference type="InterPro" id="IPR009000">
    <property type="entry name" value="Transl_B-barrel_sf"/>
</dbReference>
<dbReference type="InterPro" id="IPR004540">
    <property type="entry name" value="Transl_elong_EFG/EF2"/>
</dbReference>
<dbReference type="InterPro" id="IPR005517">
    <property type="entry name" value="Transl_elong_EFG/EF2_IV"/>
</dbReference>
<dbReference type="NCBIfam" id="TIGR00484">
    <property type="entry name" value="EF-G"/>
    <property type="match status" value="1"/>
</dbReference>
<dbReference type="NCBIfam" id="NF009381">
    <property type="entry name" value="PRK12740.1-5"/>
    <property type="match status" value="1"/>
</dbReference>
<dbReference type="NCBIfam" id="TIGR00231">
    <property type="entry name" value="small_GTP"/>
    <property type="match status" value="1"/>
</dbReference>
<dbReference type="PANTHER" id="PTHR43261:SF5">
    <property type="entry name" value="ELONGATION FACTOR G 1"/>
    <property type="match status" value="1"/>
</dbReference>
<dbReference type="PANTHER" id="PTHR43261">
    <property type="entry name" value="TRANSLATION ELONGATION FACTOR G-RELATED"/>
    <property type="match status" value="1"/>
</dbReference>
<dbReference type="Pfam" id="PF00679">
    <property type="entry name" value="EFG_C"/>
    <property type="match status" value="1"/>
</dbReference>
<dbReference type="Pfam" id="PF14492">
    <property type="entry name" value="EFG_III"/>
    <property type="match status" value="1"/>
</dbReference>
<dbReference type="Pfam" id="PF03764">
    <property type="entry name" value="EFG_IV"/>
    <property type="match status" value="1"/>
</dbReference>
<dbReference type="Pfam" id="PF00009">
    <property type="entry name" value="GTP_EFTU"/>
    <property type="match status" value="1"/>
</dbReference>
<dbReference type="Pfam" id="PF03144">
    <property type="entry name" value="GTP_EFTU_D2"/>
    <property type="match status" value="1"/>
</dbReference>
<dbReference type="PRINTS" id="PR00315">
    <property type="entry name" value="ELONGATNFCT"/>
</dbReference>
<dbReference type="SMART" id="SM00838">
    <property type="entry name" value="EFG_C"/>
    <property type="match status" value="1"/>
</dbReference>
<dbReference type="SMART" id="SM00889">
    <property type="entry name" value="EFG_IV"/>
    <property type="match status" value="1"/>
</dbReference>
<dbReference type="SUPFAM" id="SSF54980">
    <property type="entry name" value="EF-G C-terminal domain-like"/>
    <property type="match status" value="2"/>
</dbReference>
<dbReference type="SUPFAM" id="SSF52540">
    <property type="entry name" value="P-loop containing nucleoside triphosphate hydrolases"/>
    <property type="match status" value="1"/>
</dbReference>
<dbReference type="SUPFAM" id="SSF54211">
    <property type="entry name" value="Ribosomal protein S5 domain 2-like"/>
    <property type="match status" value="1"/>
</dbReference>
<dbReference type="SUPFAM" id="SSF50447">
    <property type="entry name" value="Translation proteins"/>
    <property type="match status" value="1"/>
</dbReference>
<dbReference type="PROSITE" id="PS00301">
    <property type="entry name" value="G_TR_1"/>
    <property type="match status" value="1"/>
</dbReference>
<dbReference type="PROSITE" id="PS51722">
    <property type="entry name" value="G_TR_2"/>
    <property type="match status" value="1"/>
</dbReference>
<sequence>MSDLSHYRNIGIFAHVDAGKTTTTERILKLTGKIHKTGEVHDGESTTDFMEQEAERGITIQSAATTCFWKDHRMNIIDTPGHVDFTVEVYRSLKVLDGGIGVFCGSGGVEPQSETNWRYANESGVARCIFVNKLDRMGADFYRVVGQVKKVLAANPLVMTLPIGIEDEFKGVVNLLDMKAYIWDDTGLPENYEVVDIPEDMVEKANEYREQLIETAVEQDDDLMMAYMDGEEPSLEDIKRCIRKGTRDLAFFPTYCGSAFKNKGIQLVLDAVIDFLPSPTEVDPQPLTDEETGEPTGEVATVSTDEPFRALAFKIMDDRFGALTFIRIYSGVLNKGDTILNSATGKTERIGRMVEMHADERTELTSAQAGDILAVVGMKNVQTGHTLCDPKNACTLEPMIFPEPVISIAVKPKDKGANEKMSIAIGKLVAEDPSFQVETDEDSGETILKGMGELHLDIKVDILKRTYGVELEVGQPQVAYRETITLPVEDSYTHKKQSGGSGQFGKIDYRIKPGETNSGFKFTSTVVGGNVPKEFFPAIEKGFAGMMEVGPLAGYPVLDVEVELYDGGFHAVDSSAIAFEIAAKGAFRQSMPKAGPQILEPVMKVDVFSPEDNVGDVIGDLNRRRGMIKDQEAGATGVRIKADVPLSEMFGYIGHLRTITSGRGQFSMEFSHYSACPQNVADKVIEEAKARKAAK</sequence>
<reference key="1">
    <citation type="journal article" date="2008" name="ISME J.">
        <title>Comparative genomics of two ecotypes of the marine planktonic copiotroph Alteromonas macleodii suggests alternative lifestyles associated with different kinds of particulate organic matter.</title>
        <authorList>
            <person name="Ivars-Martinez E."/>
            <person name="Martin-Cuadrado A.-B."/>
            <person name="D'Auria G."/>
            <person name="Mira A."/>
            <person name="Ferriera S."/>
            <person name="Johnson J."/>
            <person name="Friedman R."/>
            <person name="Rodriguez-Valera F."/>
        </authorList>
    </citation>
    <scope>NUCLEOTIDE SEQUENCE [LARGE SCALE GENOMIC DNA]</scope>
    <source>
        <strain>DSM 17117 / CIP 110805 / LMG 28347 / Deep ecotype</strain>
    </source>
</reference>
<organism>
    <name type="scientific">Alteromonas mediterranea (strain DSM 17117 / CIP 110805 / LMG 28347 / Deep ecotype)</name>
    <dbReference type="NCBI Taxonomy" id="1774373"/>
    <lineage>
        <taxon>Bacteria</taxon>
        <taxon>Pseudomonadati</taxon>
        <taxon>Pseudomonadota</taxon>
        <taxon>Gammaproteobacteria</taxon>
        <taxon>Alteromonadales</taxon>
        <taxon>Alteromonadaceae</taxon>
        <taxon>Alteromonas/Salinimonas group</taxon>
        <taxon>Alteromonas</taxon>
    </lineage>
</organism>
<proteinExistence type="inferred from homology"/>
<protein>
    <recommendedName>
        <fullName evidence="1">Elongation factor G</fullName>
        <shortName evidence="1">EF-G</shortName>
    </recommendedName>
</protein>
<name>EFG_ALTMD</name>
<keyword id="KW-0963">Cytoplasm</keyword>
<keyword id="KW-0251">Elongation factor</keyword>
<keyword id="KW-0342">GTP-binding</keyword>
<keyword id="KW-0547">Nucleotide-binding</keyword>
<keyword id="KW-0648">Protein biosynthesis</keyword>
<comment type="function">
    <text evidence="1">Catalyzes the GTP-dependent ribosomal translocation step during translation elongation. During this step, the ribosome changes from the pre-translocational (PRE) to the post-translocational (POST) state as the newly formed A-site-bound peptidyl-tRNA and P-site-bound deacylated tRNA move to the P and E sites, respectively. Catalyzes the coordinated movement of the two tRNA molecules, the mRNA and conformational changes in the ribosome.</text>
</comment>
<comment type="subcellular location">
    <subcellularLocation>
        <location evidence="1">Cytoplasm</location>
    </subcellularLocation>
</comment>
<comment type="similarity">
    <text evidence="1">Belongs to the TRAFAC class translation factor GTPase superfamily. Classic translation factor GTPase family. EF-G/EF-2 subfamily.</text>
</comment>
<evidence type="ECO:0000255" key="1">
    <source>
        <dbReference type="HAMAP-Rule" id="MF_00054"/>
    </source>
</evidence>
<evidence type="ECO:0000256" key="2">
    <source>
        <dbReference type="SAM" id="MobiDB-lite"/>
    </source>
</evidence>
<gene>
    <name evidence="1" type="primary">fusA</name>
    <name type="ordered locus">MADE_1007700</name>
</gene>